<gene>
    <name evidence="1" type="primary">clpP</name>
    <name type="ordered locus">PG_0418</name>
</gene>
<comment type="function">
    <text evidence="1">Cleaves peptides in various proteins in a process that requires ATP hydrolysis. Has a chymotrypsin-like activity. Plays a major role in the degradation of misfolded proteins.</text>
</comment>
<comment type="catalytic activity">
    <reaction evidence="1">
        <text>Hydrolysis of proteins to small peptides in the presence of ATP and magnesium. alpha-casein is the usual test substrate. In the absence of ATP, only oligopeptides shorter than five residues are hydrolyzed (such as succinyl-Leu-Tyr-|-NHMec, and Leu-Tyr-Leu-|-Tyr-Trp, in which cleavage of the -Tyr-|-Leu- and -Tyr-|-Trp bonds also occurs).</text>
        <dbReference type="EC" id="3.4.21.92"/>
    </reaction>
</comment>
<comment type="subunit">
    <text evidence="1">Fourteen ClpP subunits assemble into 2 heptameric rings which stack back to back to give a disk-like structure with a central cavity, resembling the structure of eukaryotic proteasomes.</text>
</comment>
<comment type="subcellular location">
    <subcellularLocation>
        <location evidence="1">Cytoplasm</location>
    </subcellularLocation>
</comment>
<comment type="similarity">
    <text evidence="1">Belongs to the peptidase S14 family.</text>
</comment>
<name>CLPP_PORGI</name>
<keyword id="KW-0963">Cytoplasm</keyword>
<keyword id="KW-0378">Hydrolase</keyword>
<keyword id="KW-0645">Protease</keyword>
<keyword id="KW-1185">Reference proteome</keyword>
<keyword id="KW-0720">Serine protease</keyword>
<reference key="1">
    <citation type="journal article" date="2003" name="J. Bacteriol.">
        <title>Complete genome sequence of the oral pathogenic bacterium Porphyromonas gingivalis strain W83.</title>
        <authorList>
            <person name="Nelson K.E."/>
            <person name="Fleischmann R.D."/>
            <person name="DeBoy R.T."/>
            <person name="Paulsen I.T."/>
            <person name="Fouts D.E."/>
            <person name="Eisen J.A."/>
            <person name="Daugherty S.C."/>
            <person name="Dodson R.J."/>
            <person name="Durkin A.S."/>
            <person name="Gwinn M.L."/>
            <person name="Haft D.H."/>
            <person name="Kolonay J.F."/>
            <person name="Nelson W.C."/>
            <person name="Mason T.M."/>
            <person name="Tallon L."/>
            <person name="Gray J."/>
            <person name="Granger D."/>
            <person name="Tettelin H."/>
            <person name="Dong H."/>
            <person name="Galvin J.L."/>
            <person name="Duncan M.J."/>
            <person name="Dewhirst F.E."/>
            <person name="Fraser C.M."/>
        </authorList>
    </citation>
    <scope>NUCLEOTIDE SEQUENCE [LARGE SCALE GENOMIC DNA]</scope>
    <source>
        <strain>ATCC BAA-308 / W83</strain>
    </source>
</reference>
<sequence>MNEFKKYATRHIGLNAQALDDYTRIQSSYISPTIIEERQLNVAQMDVFSRLMMDRIIFLGTQIDDYTANVIQAQLLYLDSADPGKDISIYLNSPGGSVYAGYGIYDTMQYIGCDVATICTGMAASMASVLLVAGTKGKRFALPHSRVMIHQPLGGMQGQASDLEIAAREILRVKKELYTIISSHSGKPVEQVEKDSDRDYWMTAPEALEYGMIDKILEKNRK</sequence>
<feature type="chain" id="PRO_0000179614" description="ATP-dependent Clp protease proteolytic subunit">
    <location>
        <begin position="1"/>
        <end position="222"/>
    </location>
</feature>
<feature type="active site" description="Nucleophile" evidence="1">
    <location>
        <position position="125"/>
    </location>
</feature>
<feature type="active site" evidence="1">
    <location>
        <position position="150"/>
    </location>
</feature>
<protein>
    <recommendedName>
        <fullName evidence="1">ATP-dependent Clp protease proteolytic subunit</fullName>
        <ecNumber evidence="1">3.4.21.92</ecNumber>
    </recommendedName>
    <alternativeName>
        <fullName evidence="1">Endopeptidase Clp</fullName>
    </alternativeName>
</protein>
<evidence type="ECO:0000255" key="1">
    <source>
        <dbReference type="HAMAP-Rule" id="MF_00444"/>
    </source>
</evidence>
<organism>
    <name type="scientific">Porphyromonas gingivalis (strain ATCC BAA-308 / W83)</name>
    <dbReference type="NCBI Taxonomy" id="242619"/>
    <lineage>
        <taxon>Bacteria</taxon>
        <taxon>Pseudomonadati</taxon>
        <taxon>Bacteroidota</taxon>
        <taxon>Bacteroidia</taxon>
        <taxon>Bacteroidales</taxon>
        <taxon>Porphyromonadaceae</taxon>
        <taxon>Porphyromonas</taxon>
    </lineage>
</organism>
<proteinExistence type="inferred from homology"/>
<dbReference type="EC" id="3.4.21.92" evidence="1"/>
<dbReference type="EMBL" id="AE015924">
    <property type="protein sequence ID" value="AAQ65619.1"/>
    <property type="molecule type" value="Genomic_DNA"/>
</dbReference>
<dbReference type="RefSeq" id="WP_010956008.1">
    <property type="nucleotide sequence ID" value="NC_002950.2"/>
</dbReference>
<dbReference type="SMR" id="Q7MX09"/>
<dbReference type="STRING" id="242619.PG_0418"/>
<dbReference type="MEROPS" id="S14.001"/>
<dbReference type="EnsemblBacteria" id="AAQ65619">
    <property type="protein sequence ID" value="AAQ65619"/>
    <property type="gene ID" value="PG_0418"/>
</dbReference>
<dbReference type="GeneID" id="57239786"/>
<dbReference type="KEGG" id="pgi:PG_0418"/>
<dbReference type="eggNOG" id="COG0740">
    <property type="taxonomic scope" value="Bacteria"/>
</dbReference>
<dbReference type="HOGENOM" id="CLU_058707_3_1_10"/>
<dbReference type="Proteomes" id="UP000000588">
    <property type="component" value="Chromosome"/>
</dbReference>
<dbReference type="GO" id="GO:0005737">
    <property type="term" value="C:cytoplasm"/>
    <property type="evidence" value="ECO:0007669"/>
    <property type="project" value="UniProtKB-SubCell"/>
</dbReference>
<dbReference type="GO" id="GO:0009368">
    <property type="term" value="C:endopeptidase Clp complex"/>
    <property type="evidence" value="ECO:0007669"/>
    <property type="project" value="TreeGrafter"/>
</dbReference>
<dbReference type="GO" id="GO:0004176">
    <property type="term" value="F:ATP-dependent peptidase activity"/>
    <property type="evidence" value="ECO:0007669"/>
    <property type="project" value="InterPro"/>
</dbReference>
<dbReference type="GO" id="GO:0051117">
    <property type="term" value="F:ATPase binding"/>
    <property type="evidence" value="ECO:0007669"/>
    <property type="project" value="TreeGrafter"/>
</dbReference>
<dbReference type="GO" id="GO:0004252">
    <property type="term" value="F:serine-type endopeptidase activity"/>
    <property type="evidence" value="ECO:0007669"/>
    <property type="project" value="UniProtKB-UniRule"/>
</dbReference>
<dbReference type="GO" id="GO:0006515">
    <property type="term" value="P:protein quality control for misfolded or incompletely synthesized proteins"/>
    <property type="evidence" value="ECO:0007669"/>
    <property type="project" value="TreeGrafter"/>
</dbReference>
<dbReference type="CDD" id="cd07017">
    <property type="entry name" value="S14_ClpP_2"/>
    <property type="match status" value="1"/>
</dbReference>
<dbReference type="FunFam" id="3.90.226.10:FF:000002">
    <property type="entry name" value="ATP-dependent Clp protease proteolytic subunit"/>
    <property type="match status" value="1"/>
</dbReference>
<dbReference type="Gene3D" id="3.90.226.10">
    <property type="entry name" value="2-enoyl-CoA Hydratase, Chain A, domain 1"/>
    <property type="match status" value="1"/>
</dbReference>
<dbReference type="HAMAP" id="MF_00444">
    <property type="entry name" value="ClpP"/>
    <property type="match status" value="1"/>
</dbReference>
<dbReference type="InterPro" id="IPR001907">
    <property type="entry name" value="ClpP"/>
</dbReference>
<dbReference type="InterPro" id="IPR029045">
    <property type="entry name" value="ClpP/crotonase-like_dom_sf"/>
</dbReference>
<dbReference type="InterPro" id="IPR023562">
    <property type="entry name" value="ClpP/TepA"/>
</dbReference>
<dbReference type="InterPro" id="IPR033135">
    <property type="entry name" value="ClpP_His_AS"/>
</dbReference>
<dbReference type="NCBIfam" id="NF001368">
    <property type="entry name" value="PRK00277.1"/>
    <property type="match status" value="1"/>
</dbReference>
<dbReference type="NCBIfam" id="NF009205">
    <property type="entry name" value="PRK12553.1"/>
    <property type="match status" value="1"/>
</dbReference>
<dbReference type="NCBIfam" id="NF011091">
    <property type="entry name" value="PRK14514.1"/>
    <property type="match status" value="1"/>
</dbReference>
<dbReference type="PANTHER" id="PTHR10381">
    <property type="entry name" value="ATP-DEPENDENT CLP PROTEASE PROTEOLYTIC SUBUNIT"/>
    <property type="match status" value="1"/>
</dbReference>
<dbReference type="PANTHER" id="PTHR10381:SF70">
    <property type="entry name" value="ATP-DEPENDENT CLP PROTEASE PROTEOLYTIC SUBUNIT"/>
    <property type="match status" value="1"/>
</dbReference>
<dbReference type="Pfam" id="PF00574">
    <property type="entry name" value="CLP_protease"/>
    <property type="match status" value="1"/>
</dbReference>
<dbReference type="PRINTS" id="PR00127">
    <property type="entry name" value="CLPPROTEASEP"/>
</dbReference>
<dbReference type="SUPFAM" id="SSF52096">
    <property type="entry name" value="ClpP/crotonase"/>
    <property type="match status" value="1"/>
</dbReference>
<dbReference type="PROSITE" id="PS00382">
    <property type="entry name" value="CLP_PROTEASE_HIS"/>
    <property type="match status" value="1"/>
</dbReference>
<accession>Q7MX09</accession>